<organism>
    <name type="scientific">Pinus thunbergii</name>
    <name type="common">Japanese black pine</name>
    <name type="synonym">Pinus thunbergiana</name>
    <dbReference type="NCBI Taxonomy" id="3350"/>
    <lineage>
        <taxon>Eukaryota</taxon>
        <taxon>Viridiplantae</taxon>
        <taxon>Streptophyta</taxon>
        <taxon>Embryophyta</taxon>
        <taxon>Tracheophyta</taxon>
        <taxon>Spermatophyta</taxon>
        <taxon>Pinopsida</taxon>
        <taxon>Pinidae</taxon>
        <taxon>Conifers I</taxon>
        <taxon>Pinales</taxon>
        <taxon>Pinaceae</taxon>
        <taxon>Pinus</taxon>
        <taxon>Pinus subgen. Pinus</taxon>
    </lineage>
</organism>
<protein>
    <recommendedName>
        <fullName evidence="1">Ribulose bisphosphate carboxylase large chain</fullName>
        <shortName evidence="1">RuBisCO large subunit</shortName>
        <ecNumber evidence="1">4.1.1.39</ecNumber>
    </recommendedName>
</protein>
<evidence type="ECO:0000255" key="1">
    <source>
        <dbReference type="HAMAP-Rule" id="MF_01338"/>
    </source>
</evidence>
<name>RBL_PINTH</name>
<comment type="function">
    <text evidence="1">RuBisCO catalyzes two reactions: the carboxylation of D-ribulose 1,5-bisphosphate, the primary event in carbon dioxide fixation, as well as the oxidative fragmentation of the pentose substrate in the photorespiration process. Both reactions occur simultaneously and in competition at the same active site.</text>
</comment>
<comment type="catalytic activity">
    <reaction evidence="1">
        <text>2 (2R)-3-phosphoglycerate + 2 H(+) = D-ribulose 1,5-bisphosphate + CO2 + H2O</text>
        <dbReference type="Rhea" id="RHEA:23124"/>
        <dbReference type="ChEBI" id="CHEBI:15377"/>
        <dbReference type="ChEBI" id="CHEBI:15378"/>
        <dbReference type="ChEBI" id="CHEBI:16526"/>
        <dbReference type="ChEBI" id="CHEBI:57870"/>
        <dbReference type="ChEBI" id="CHEBI:58272"/>
        <dbReference type="EC" id="4.1.1.39"/>
    </reaction>
</comment>
<comment type="catalytic activity">
    <reaction evidence="1">
        <text>D-ribulose 1,5-bisphosphate + O2 = 2-phosphoglycolate + (2R)-3-phosphoglycerate + 2 H(+)</text>
        <dbReference type="Rhea" id="RHEA:36631"/>
        <dbReference type="ChEBI" id="CHEBI:15378"/>
        <dbReference type="ChEBI" id="CHEBI:15379"/>
        <dbReference type="ChEBI" id="CHEBI:57870"/>
        <dbReference type="ChEBI" id="CHEBI:58033"/>
        <dbReference type="ChEBI" id="CHEBI:58272"/>
    </reaction>
</comment>
<comment type="cofactor">
    <cofactor evidence="1">
        <name>Mg(2+)</name>
        <dbReference type="ChEBI" id="CHEBI:18420"/>
    </cofactor>
    <text evidence="1">Binds 1 Mg(2+) ion per subunit.</text>
</comment>
<comment type="subunit">
    <text evidence="1">Heterohexadecamer of 8 large chains and 8 small chains; disulfide-linked. The disulfide link is formed within the large subunit homodimers.</text>
</comment>
<comment type="subcellular location">
    <subcellularLocation>
        <location>Plastid</location>
        <location>Chloroplast</location>
    </subcellularLocation>
</comment>
<comment type="PTM">
    <text evidence="1">The disulfide bond which can form in the large chain dimeric partners within the hexadecamer appears to be associated with oxidative stress and protein turnover.</text>
</comment>
<comment type="miscellaneous">
    <text evidence="1">The basic functional RuBisCO is composed of a large chain homodimer in a 'head-to-tail' conformation. In form I RuBisCO this homodimer is arranged in a barrel-like tetramer with the small subunits forming a tetrameric 'cap' on each end of the 'barrel'.</text>
</comment>
<comment type="similarity">
    <text evidence="1">Belongs to the RuBisCO large chain family. Type I subfamily.</text>
</comment>
<sequence length="475" mass="52756">MSPKTETKASVGFKAGVKDYRLTYYTPEYQTKDTDILAAFRVTPQPGVPPEEAGAAVAAESSTGTWTTVWTDGLTSLDRYKGRCYDIEPVPGEETQFIAYVAYPLDLFEEGSVTNLFTSIVGNVFGFKALRALRLEDLRIPPSYSKTFQGPPHGIQVERDKLNKYGRPLLGCTIKPKLGLSAKNYGRAVYECLRGGLDFTKDDENVNSQPFMRWRDRFVFCAEALNKAQAETGEIKGHYLNATAGTCEEMMKRAIFARELGVPIVMHDYLTGGFTANTSLAHYCRDNGLLLHIHRAMHAVIDRQRNHGMHFRVLAKALRMSGGDHIHAGTVVGKLEGERDVTLGFVDLLRDDFIEKDRSRGIYFTQDWVSMPGVLPVASGGIHVWHMPALTEIFGDDSVLQFGGGTLGHPWGNAPGAVANRVALEACVQARNEGRDLAREGNEVIREACKWSPELAAACEIWKEIKFEFDVIDRL</sequence>
<keyword id="KW-0007">Acetylation</keyword>
<keyword id="KW-0113">Calvin cycle</keyword>
<keyword id="KW-0120">Carbon dioxide fixation</keyword>
<keyword id="KW-0150">Chloroplast</keyword>
<keyword id="KW-1015">Disulfide bond</keyword>
<keyword id="KW-0456">Lyase</keyword>
<keyword id="KW-0460">Magnesium</keyword>
<keyword id="KW-0479">Metal-binding</keyword>
<keyword id="KW-0488">Methylation</keyword>
<keyword id="KW-0503">Monooxygenase</keyword>
<keyword id="KW-0560">Oxidoreductase</keyword>
<keyword id="KW-0601">Photorespiration</keyword>
<keyword id="KW-0602">Photosynthesis</keyword>
<keyword id="KW-0934">Plastid</keyword>
<proteinExistence type="inferred from homology"/>
<gene>
    <name evidence="1" type="primary">rbcL</name>
</gene>
<feature type="propeptide" id="PRO_0000031369" evidence="1">
    <location>
        <begin position="1"/>
        <end position="2"/>
    </location>
</feature>
<feature type="chain" id="PRO_0000031370" description="Ribulose bisphosphate carboxylase large chain">
    <location>
        <begin position="3"/>
        <end position="475"/>
    </location>
</feature>
<feature type="active site" description="Proton acceptor" evidence="1">
    <location>
        <position position="175"/>
    </location>
</feature>
<feature type="active site" description="Proton acceptor" evidence="1">
    <location>
        <position position="294"/>
    </location>
</feature>
<feature type="binding site" description="in homodimeric partner" evidence="1">
    <location>
        <position position="123"/>
    </location>
    <ligand>
        <name>substrate</name>
    </ligand>
</feature>
<feature type="binding site" evidence="1">
    <location>
        <position position="173"/>
    </location>
    <ligand>
        <name>substrate</name>
    </ligand>
</feature>
<feature type="binding site" evidence="1">
    <location>
        <position position="177"/>
    </location>
    <ligand>
        <name>substrate</name>
    </ligand>
</feature>
<feature type="binding site" description="via carbamate group" evidence="1">
    <location>
        <position position="201"/>
    </location>
    <ligand>
        <name>Mg(2+)</name>
        <dbReference type="ChEBI" id="CHEBI:18420"/>
    </ligand>
</feature>
<feature type="binding site" evidence="1">
    <location>
        <position position="203"/>
    </location>
    <ligand>
        <name>Mg(2+)</name>
        <dbReference type="ChEBI" id="CHEBI:18420"/>
    </ligand>
</feature>
<feature type="binding site" evidence="1">
    <location>
        <position position="204"/>
    </location>
    <ligand>
        <name>Mg(2+)</name>
        <dbReference type="ChEBI" id="CHEBI:18420"/>
    </ligand>
</feature>
<feature type="binding site" evidence="1">
    <location>
        <position position="295"/>
    </location>
    <ligand>
        <name>substrate</name>
    </ligand>
</feature>
<feature type="binding site" evidence="1">
    <location>
        <position position="327"/>
    </location>
    <ligand>
        <name>substrate</name>
    </ligand>
</feature>
<feature type="binding site" evidence="1">
    <location>
        <position position="379"/>
    </location>
    <ligand>
        <name>substrate</name>
    </ligand>
</feature>
<feature type="site" description="Transition state stabilizer" evidence="1">
    <location>
        <position position="334"/>
    </location>
</feature>
<feature type="modified residue" description="N-acetylproline" evidence="1">
    <location>
        <position position="3"/>
    </location>
</feature>
<feature type="modified residue" description="N6,N6,N6-trimethyllysine" evidence="1">
    <location>
        <position position="14"/>
    </location>
</feature>
<feature type="modified residue" description="N6-carboxylysine" evidence="1">
    <location>
        <position position="201"/>
    </location>
</feature>
<feature type="disulfide bond" description="Interchain; in linked form" evidence="1">
    <location>
        <position position="247"/>
    </location>
</feature>
<reference key="1">
    <citation type="journal article" date="1994" name="Proc. Natl. Acad. Sci. U.S.A.">
        <title>Loss of all ndh genes as determined by sequencing the entire chloroplast genome of the black pine Pinus thunbergii.</title>
        <authorList>
            <person name="Wakasugi T."/>
            <person name="Tsudzuki J."/>
            <person name="Ito S."/>
            <person name="Nakashima K."/>
            <person name="Tsudzuki T."/>
            <person name="Sugiura M."/>
        </authorList>
    </citation>
    <scope>NUCLEOTIDE SEQUENCE [LARGE SCALE GENOMIC DNA]</scope>
</reference>
<geneLocation type="chloroplast"/>
<accession>P41621</accession>
<dbReference type="EC" id="4.1.1.39" evidence="1"/>
<dbReference type="EMBL" id="D17510">
    <property type="protein sequence ID" value="BAA04368.1"/>
    <property type="molecule type" value="Genomic_DNA"/>
</dbReference>
<dbReference type="PIR" id="T07490">
    <property type="entry name" value="T07490"/>
</dbReference>
<dbReference type="RefSeq" id="NP_042411.1">
    <property type="nucleotide sequence ID" value="NC_001631.1"/>
</dbReference>
<dbReference type="SMR" id="P41621"/>
<dbReference type="GeneID" id="809094"/>
<dbReference type="GO" id="GO:0009507">
    <property type="term" value="C:chloroplast"/>
    <property type="evidence" value="ECO:0007669"/>
    <property type="project" value="UniProtKB-SubCell"/>
</dbReference>
<dbReference type="GO" id="GO:0000287">
    <property type="term" value="F:magnesium ion binding"/>
    <property type="evidence" value="ECO:0007669"/>
    <property type="project" value="UniProtKB-UniRule"/>
</dbReference>
<dbReference type="GO" id="GO:0004497">
    <property type="term" value="F:monooxygenase activity"/>
    <property type="evidence" value="ECO:0007669"/>
    <property type="project" value="UniProtKB-KW"/>
</dbReference>
<dbReference type="GO" id="GO:0016984">
    <property type="term" value="F:ribulose-bisphosphate carboxylase activity"/>
    <property type="evidence" value="ECO:0007669"/>
    <property type="project" value="UniProtKB-UniRule"/>
</dbReference>
<dbReference type="GO" id="GO:0009853">
    <property type="term" value="P:photorespiration"/>
    <property type="evidence" value="ECO:0007669"/>
    <property type="project" value="UniProtKB-KW"/>
</dbReference>
<dbReference type="GO" id="GO:0019253">
    <property type="term" value="P:reductive pentose-phosphate cycle"/>
    <property type="evidence" value="ECO:0007669"/>
    <property type="project" value="UniProtKB-UniRule"/>
</dbReference>
<dbReference type="CDD" id="cd08212">
    <property type="entry name" value="RuBisCO_large_I"/>
    <property type="match status" value="1"/>
</dbReference>
<dbReference type="FunFam" id="3.20.20.110:FF:000001">
    <property type="entry name" value="Ribulose bisphosphate carboxylase large chain"/>
    <property type="match status" value="1"/>
</dbReference>
<dbReference type="FunFam" id="3.30.70.150:FF:000001">
    <property type="entry name" value="Ribulose bisphosphate carboxylase large chain"/>
    <property type="match status" value="1"/>
</dbReference>
<dbReference type="Gene3D" id="3.20.20.110">
    <property type="entry name" value="Ribulose bisphosphate carboxylase, large subunit, C-terminal domain"/>
    <property type="match status" value="1"/>
</dbReference>
<dbReference type="Gene3D" id="3.30.70.150">
    <property type="entry name" value="RuBisCO large subunit, N-terminal domain"/>
    <property type="match status" value="1"/>
</dbReference>
<dbReference type="HAMAP" id="MF_01338">
    <property type="entry name" value="RuBisCO_L_type1"/>
    <property type="match status" value="1"/>
</dbReference>
<dbReference type="InterPro" id="IPR033966">
    <property type="entry name" value="RuBisCO"/>
</dbReference>
<dbReference type="InterPro" id="IPR020878">
    <property type="entry name" value="RuBisCo_large_chain_AS"/>
</dbReference>
<dbReference type="InterPro" id="IPR000685">
    <property type="entry name" value="RuBisCO_lsu_C"/>
</dbReference>
<dbReference type="InterPro" id="IPR036376">
    <property type="entry name" value="RuBisCO_lsu_C_sf"/>
</dbReference>
<dbReference type="InterPro" id="IPR017443">
    <property type="entry name" value="RuBisCO_lsu_fd_N"/>
</dbReference>
<dbReference type="InterPro" id="IPR036422">
    <property type="entry name" value="RuBisCO_lsu_N_sf"/>
</dbReference>
<dbReference type="InterPro" id="IPR020888">
    <property type="entry name" value="RuBisCO_lsuI"/>
</dbReference>
<dbReference type="NCBIfam" id="NF003252">
    <property type="entry name" value="PRK04208.1"/>
    <property type="match status" value="1"/>
</dbReference>
<dbReference type="PANTHER" id="PTHR42704">
    <property type="entry name" value="RIBULOSE BISPHOSPHATE CARBOXYLASE"/>
    <property type="match status" value="1"/>
</dbReference>
<dbReference type="PANTHER" id="PTHR42704:SF15">
    <property type="entry name" value="RIBULOSE BISPHOSPHATE CARBOXYLASE LARGE CHAIN"/>
    <property type="match status" value="1"/>
</dbReference>
<dbReference type="Pfam" id="PF00016">
    <property type="entry name" value="RuBisCO_large"/>
    <property type="match status" value="1"/>
</dbReference>
<dbReference type="Pfam" id="PF02788">
    <property type="entry name" value="RuBisCO_large_N"/>
    <property type="match status" value="1"/>
</dbReference>
<dbReference type="SFLD" id="SFLDG01052">
    <property type="entry name" value="RuBisCO"/>
    <property type="match status" value="1"/>
</dbReference>
<dbReference type="SFLD" id="SFLDS00014">
    <property type="entry name" value="RuBisCO"/>
    <property type="match status" value="1"/>
</dbReference>
<dbReference type="SFLD" id="SFLDG00301">
    <property type="entry name" value="RuBisCO-like_proteins"/>
    <property type="match status" value="1"/>
</dbReference>
<dbReference type="SUPFAM" id="SSF51649">
    <property type="entry name" value="RuBisCo, C-terminal domain"/>
    <property type="match status" value="1"/>
</dbReference>
<dbReference type="SUPFAM" id="SSF54966">
    <property type="entry name" value="RuBisCO, large subunit, small (N-terminal) domain"/>
    <property type="match status" value="1"/>
</dbReference>
<dbReference type="PROSITE" id="PS00157">
    <property type="entry name" value="RUBISCO_LARGE"/>
    <property type="match status" value="1"/>
</dbReference>